<accession>D3ZQG6</accession>
<protein>
    <recommendedName>
        <fullName>Tripartite motif-containing protein 2</fullName>
        <ecNumber>2.3.2.27</ecNumber>
    </recommendedName>
    <alternativeName>
        <fullName>E3 ubiquitin-protein ligase TRIM2</fullName>
    </alternativeName>
    <alternativeName>
        <fullName evidence="7">RING-type E3 ubiquitin transferase TRIM2</fullName>
    </alternativeName>
</protein>
<dbReference type="EC" id="2.3.2.27"/>
<dbReference type="EMBL" id="CH473976">
    <property type="protein sequence ID" value="EDM00825.1"/>
    <property type="status" value="ALT_SEQ"/>
    <property type="molecule type" value="Genomic_DNA"/>
</dbReference>
<dbReference type="RefSeq" id="NP_001102022.1">
    <property type="nucleotide sequence ID" value="NM_001108552.1"/>
</dbReference>
<dbReference type="RefSeq" id="NP_001417386.1">
    <property type="nucleotide sequence ID" value="NM_001430457.1"/>
</dbReference>
<dbReference type="SMR" id="D3ZQG6"/>
<dbReference type="BioGRID" id="263094">
    <property type="interactions" value="4"/>
</dbReference>
<dbReference type="FunCoup" id="D3ZQG6">
    <property type="interactions" value="2045"/>
</dbReference>
<dbReference type="STRING" id="10116.ENSRNOP00000060362"/>
<dbReference type="iPTMnet" id="D3ZQG6"/>
<dbReference type="PhosphoSitePlus" id="D3ZQG6"/>
<dbReference type="PaxDb" id="10116-ENSRNOP00000060362"/>
<dbReference type="GeneID" id="361970"/>
<dbReference type="KEGG" id="rno:361970"/>
<dbReference type="UCSC" id="RGD:1310981">
    <property type="organism name" value="rat"/>
</dbReference>
<dbReference type="AGR" id="RGD:1310981"/>
<dbReference type="CTD" id="23321"/>
<dbReference type="RGD" id="1310981">
    <property type="gene designation" value="Trim2"/>
</dbReference>
<dbReference type="eggNOG" id="KOG2177">
    <property type="taxonomic scope" value="Eukaryota"/>
</dbReference>
<dbReference type="InParanoid" id="D3ZQG6"/>
<dbReference type="TreeFam" id="TF331018"/>
<dbReference type="UniPathway" id="UPA00143"/>
<dbReference type="PRO" id="PR:D3ZQG6"/>
<dbReference type="Proteomes" id="UP000002494">
    <property type="component" value="Unplaced"/>
</dbReference>
<dbReference type="Proteomes" id="UP000234681">
    <property type="component" value="Chromosome 2"/>
</dbReference>
<dbReference type="GO" id="GO:0005737">
    <property type="term" value="C:cytoplasm"/>
    <property type="evidence" value="ECO:0000266"/>
    <property type="project" value="RGD"/>
</dbReference>
<dbReference type="GO" id="GO:0061630">
    <property type="term" value="F:ubiquitin protein ligase activity"/>
    <property type="evidence" value="ECO:0000266"/>
    <property type="project" value="RGD"/>
</dbReference>
<dbReference type="GO" id="GO:0004842">
    <property type="term" value="F:ubiquitin-protein transferase activity"/>
    <property type="evidence" value="ECO:0000250"/>
    <property type="project" value="UniProtKB"/>
</dbReference>
<dbReference type="GO" id="GO:0008270">
    <property type="term" value="F:zinc ion binding"/>
    <property type="evidence" value="ECO:0007669"/>
    <property type="project" value="UniProtKB-KW"/>
</dbReference>
<dbReference type="GO" id="GO:1990830">
    <property type="term" value="P:cellular response to leukemia inhibitory factor"/>
    <property type="evidence" value="ECO:0000266"/>
    <property type="project" value="RGD"/>
</dbReference>
<dbReference type="GO" id="GO:0043161">
    <property type="term" value="P:proteasome-mediated ubiquitin-dependent protein catabolic process"/>
    <property type="evidence" value="ECO:0000318"/>
    <property type="project" value="GO_Central"/>
</dbReference>
<dbReference type="GO" id="GO:0000209">
    <property type="term" value="P:protein polyubiquitination"/>
    <property type="evidence" value="ECO:0000318"/>
    <property type="project" value="GO_Central"/>
</dbReference>
<dbReference type="GO" id="GO:0043523">
    <property type="term" value="P:regulation of neuron apoptotic process"/>
    <property type="evidence" value="ECO:0000315"/>
    <property type="project" value="UniProtKB"/>
</dbReference>
<dbReference type="CDD" id="cd19824">
    <property type="entry name" value="Bbox2_TRIM2_C-VII"/>
    <property type="match status" value="1"/>
</dbReference>
<dbReference type="CDD" id="cd14960">
    <property type="entry name" value="NHL_TRIM2_like"/>
    <property type="match status" value="1"/>
</dbReference>
<dbReference type="CDD" id="cd16767">
    <property type="entry name" value="RING-HC_TRIM2"/>
    <property type="match status" value="1"/>
</dbReference>
<dbReference type="FunFam" id="2.120.10.30:FF:000007">
    <property type="entry name" value="Putative tripartite motif-containing protein 2"/>
    <property type="match status" value="1"/>
</dbReference>
<dbReference type="FunFam" id="2.120.10.30:FF:000004">
    <property type="entry name" value="Tripartite motif containing 2"/>
    <property type="match status" value="1"/>
</dbReference>
<dbReference type="FunFam" id="3.30.40.10:FF:000032">
    <property type="entry name" value="Tripartite motif containing 2"/>
    <property type="match status" value="1"/>
</dbReference>
<dbReference type="FunFam" id="2.60.40.10:FF:000198">
    <property type="entry name" value="Tripartite motif-containing protein 2"/>
    <property type="match status" value="1"/>
</dbReference>
<dbReference type="FunFam" id="3.30.160.60:FF:000154">
    <property type="entry name" value="Tripartite motif-containing protein 2"/>
    <property type="match status" value="1"/>
</dbReference>
<dbReference type="Gene3D" id="3.30.160.60">
    <property type="entry name" value="Classic Zinc Finger"/>
    <property type="match status" value="1"/>
</dbReference>
<dbReference type="Gene3D" id="2.60.40.10">
    <property type="entry name" value="Immunoglobulins"/>
    <property type="match status" value="1"/>
</dbReference>
<dbReference type="Gene3D" id="2.120.10.30">
    <property type="entry name" value="TolB, C-terminal domain"/>
    <property type="match status" value="2"/>
</dbReference>
<dbReference type="Gene3D" id="3.30.40.10">
    <property type="entry name" value="Zinc/RING finger domain, C3HC4 (zinc finger)"/>
    <property type="match status" value="1"/>
</dbReference>
<dbReference type="InterPro" id="IPR011042">
    <property type="entry name" value="6-blade_b-propeller_TolB-like"/>
</dbReference>
<dbReference type="InterPro" id="IPR003649">
    <property type="entry name" value="Bbox_C"/>
</dbReference>
<dbReference type="InterPro" id="IPR017868">
    <property type="entry name" value="Filamin/ABP280_repeat-like"/>
</dbReference>
<dbReference type="InterPro" id="IPR001298">
    <property type="entry name" value="Filamin/ABP280_rpt"/>
</dbReference>
<dbReference type="InterPro" id="IPR013783">
    <property type="entry name" value="Ig-like_fold"/>
</dbReference>
<dbReference type="InterPro" id="IPR014756">
    <property type="entry name" value="Ig_E-set"/>
</dbReference>
<dbReference type="InterPro" id="IPR001258">
    <property type="entry name" value="NHL_repeat"/>
</dbReference>
<dbReference type="InterPro" id="IPR050952">
    <property type="entry name" value="TRIM-NHL_E3_ligases"/>
</dbReference>
<dbReference type="InterPro" id="IPR027370">
    <property type="entry name" value="Znf-RING_euk"/>
</dbReference>
<dbReference type="InterPro" id="IPR000315">
    <property type="entry name" value="Znf_B-box"/>
</dbReference>
<dbReference type="InterPro" id="IPR001841">
    <property type="entry name" value="Znf_RING"/>
</dbReference>
<dbReference type="InterPro" id="IPR013083">
    <property type="entry name" value="Znf_RING/FYVE/PHD"/>
</dbReference>
<dbReference type="InterPro" id="IPR017907">
    <property type="entry name" value="Znf_RING_CS"/>
</dbReference>
<dbReference type="PANTHER" id="PTHR24104">
    <property type="entry name" value="E3 UBIQUITIN-PROTEIN LIGASE NHLRC1-RELATED"/>
    <property type="match status" value="1"/>
</dbReference>
<dbReference type="PANTHER" id="PTHR24104:SF58">
    <property type="entry name" value="TRIPARTITE MOTIF-CONTAINING PROTEIN 2"/>
    <property type="match status" value="1"/>
</dbReference>
<dbReference type="Pfam" id="PF00630">
    <property type="entry name" value="Filamin"/>
    <property type="match status" value="1"/>
</dbReference>
<dbReference type="Pfam" id="PF01436">
    <property type="entry name" value="NHL"/>
    <property type="match status" value="6"/>
</dbReference>
<dbReference type="Pfam" id="PF00643">
    <property type="entry name" value="zf-B_box"/>
    <property type="match status" value="1"/>
</dbReference>
<dbReference type="Pfam" id="PF13445">
    <property type="entry name" value="zf-RING_UBOX"/>
    <property type="match status" value="1"/>
</dbReference>
<dbReference type="SMART" id="SM00502">
    <property type="entry name" value="BBC"/>
    <property type="match status" value="1"/>
</dbReference>
<dbReference type="SMART" id="SM00336">
    <property type="entry name" value="BBOX"/>
    <property type="match status" value="1"/>
</dbReference>
<dbReference type="SMART" id="SM00557">
    <property type="entry name" value="IG_FLMN"/>
    <property type="match status" value="1"/>
</dbReference>
<dbReference type="SMART" id="SM00184">
    <property type="entry name" value="RING"/>
    <property type="match status" value="1"/>
</dbReference>
<dbReference type="SUPFAM" id="SSF57845">
    <property type="entry name" value="B-box zinc-binding domain"/>
    <property type="match status" value="1"/>
</dbReference>
<dbReference type="SUPFAM" id="SSF81296">
    <property type="entry name" value="E set domains"/>
    <property type="match status" value="1"/>
</dbReference>
<dbReference type="SUPFAM" id="SSF101898">
    <property type="entry name" value="NHL repeat"/>
    <property type="match status" value="1"/>
</dbReference>
<dbReference type="SUPFAM" id="SSF57850">
    <property type="entry name" value="RING/U-box"/>
    <property type="match status" value="1"/>
</dbReference>
<dbReference type="PROSITE" id="PS50194">
    <property type="entry name" value="FILAMIN_REPEAT"/>
    <property type="match status" value="1"/>
</dbReference>
<dbReference type="PROSITE" id="PS51125">
    <property type="entry name" value="NHL"/>
    <property type="match status" value="6"/>
</dbReference>
<dbReference type="PROSITE" id="PS50119">
    <property type="entry name" value="ZF_BBOX"/>
    <property type="match status" value="1"/>
</dbReference>
<dbReference type="PROSITE" id="PS00518">
    <property type="entry name" value="ZF_RING_1"/>
    <property type="match status" value="1"/>
</dbReference>
<dbReference type="PROSITE" id="PS50089">
    <property type="entry name" value="ZF_RING_2"/>
    <property type="match status" value="1"/>
</dbReference>
<evidence type="ECO:0000250" key="1">
    <source>
        <dbReference type="UniProtKB" id="Q9C040"/>
    </source>
</evidence>
<evidence type="ECO:0000250" key="2">
    <source>
        <dbReference type="UniProtKB" id="Q9ESN6"/>
    </source>
</evidence>
<evidence type="ECO:0000255" key="3">
    <source>
        <dbReference type="PROSITE-ProRule" id="PRU00024"/>
    </source>
</evidence>
<evidence type="ECO:0000255" key="4">
    <source>
        <dbReference type="PROSITE-ProRule" id="PRU00175"/>
    </source>
</evidence>
<evidence type="ECO:0000256" key="5">
    <source>
        <dbReference type="SAM" id="MobiDB-lite"/>
    </source>
</evidence>
<evidence type="ECO:0000269" key="6">
    <source>
    </source>
</evidence>
<evidence type="ECO:0000305" key="7"/>
<evidence type="ECO:0007744" key="8">
    <source>
    </source>
</evidence>
<keyword id="KW-0903">Direct protein sequencing</keyword>
<keyword id="KW-0479">Metal-binding</keyword>
<keyword id="KW-0597">Phosphoprotein</keyword>
<keyword id="KW-1185">Reference proteome</keyword>
<keyword id="KW-0677">Repeat</keyword>
<keyword id="KW-0808">Transferase</keyword>
<keyword id="KW-0832">Ubl conjugation</keyword>
<keyword id="KW-0833">Ubl conjugation pathway</keyword>
<keyword id="KW-0862">Zinc</keyword>
<keyword id="KW-0863">Zinc-finger</keyword>
<sequence>MASEGASIPSPVVRQIDKQFLICSICLERYKNPKVLPCLHTFCERCLQNYIPAHSLTLSCPVCRQTSILPEKGVAALQNNFFITNLMDVLQRTPGSNGEDPSILQTVTAVAAGKPLSCPNHDGNVMEFYCQSCETAMCRECTEGEHAEHPTVPLKDVVEQHKASLQVQLDAVNKRLPEIDSALQFISEIIHQLTNQKASIVDDIHSTFDELQKTLNVRKSVLLMELEVNYGLKHKVLQSQLDTLLQGQESIKSCSNFTAQALNHGTETEVLLVKKQMSEKLNELADQDFPLHPRENDQLDFIVETEGLKKSIHNLGTILTTNAVASETVATGEGLRQTIIGQPMSVTITTKDKDGELCKTGNAYLTAELSTPDGSVADGEILDNKNGTYEFLYTVQKEGDFTLSLRLYDQHIRGSPFKLKVIRSADVSPTTEGVKRRVKSPGSGHVKQKAVKRPASMYSTGKRKENPIEDDLIFRVGTKGRNKGEFTNLQGVAASTSGKILIADSNNQCVQIFSNDGQFKSRFGIRGRSPGQLQRPTGVAVHPSGDIIIADYDNKWVSIFSNDGKFKTKIGSGKLMGPKGVSVDRNGHIIVVDNKACCVFIFQPNGKIVTRFGSRGNGDRQFAGPHFAAVNSSNEIIITDFHNHSVKVFNQEGEFMLKFGSNGEGNGQFNAPTGVAVDSNGNIIVADWGNSRIQVFDGSGSFLSYINTSADPLYGPQGLALTSDGHVVVADSGNHCFKVYRYLQ</sequence>
<comment type="function">
    <text evidence="1 2 6">UBE2D1-dependent E3 ubiquitin-protein ligase that mediates the ubiquitination of NEFL and of phosphorylated BCL2L11. Plays a neuroprotective function. May play a role in neuronal rapid ischemic tolerance. Plays a role in antiviral immunity and limits New World arenavirus infection independently of its ubiquitin ligase activity.</text>
</comment>
<comment type="catalytic activity">
    <reaction>
        <text>S-ubiquitinyl-[E2 ubiquitin-conjugating enzyme]-L-cysteine + [acceptor protein]-L-lysine = [E2 ubiquitin-conjugating enzyme]-L-cysteine + N(6)-ubiquitinyl-[acceptor protein]-L-lysine.</text>
        <dbReference type="EC" id="2.3.2.27"/>
    </reaction>
</comment>
<comment type="pathway">
    <text>Protein modification; protein ubiquitination.</text>
</comment>
<comment type="subunit">
    <text evidence="1 2">Forms homooligomers (By similarity). Interacts with TRIM3; this interaction reduces TRIM2 activity (By similarity). Interacts with myosin V; myosin V may not be a substrate for ubiquitination. Interacts with NEFL. Interacts with phosphorylated BCL2L11. Interacts with SIRPA (By similarity).</text>
</comment>
<comment type="domain">
    <text evidence="2">The interaction with myosin V is dependent upon its NHL repeats, which form a beta-propeller (NHL) domain containing six blades.</text>
</comment>
<comment type="PTM">
    <text evidence="2">RING-type zinc finger-dependent and UBE2D1-dependent autoubiquitination.</text>
</comment>
<comment type="similarity">
    <text evidence="7">Belongs to the TRIM/RBCC family.</text>
</comment>
<comment type="sequence caution" evidence="7">
    <conflict type="erroneous gene model prediction">
        <sequence resource="EMBL-CDS" id="EDM00825"/>
    </conflict>
</comment>
<organism>
    <name type="scientific">Rattus norvegicus</name>
    <name type="common">Rat</name>
    <dbReference type="NCBI Taxonomy" id="10116"/>
    <lineage>
        <taxon>Eukaryota</taxon>
        <taxon>Metazoa</taxon>
        <taxon>Chordata</taxon>
        <taxon>Craniata</taxon>
        <taxon>Vertebrata</taxon>
        <taxon>Euteleostomi</taxon>
        <taxon>Mammalia</taxon>
        <taxon>Eutheria</taxon>
        <taxon>Euarchontoglires</taxon>
        <taxon>Glires</taxon>
        <taxon>Rodentia</taxon>
        <taxon>Myomorpha</taxon>
        <taxon>Muroidea</taxon>
        <taxon>Muridae</taxon>
        <taxon>Murinae</taxon>
        <taxon>Rattus</taxon>
    </lineage>
</organism>
<feature type="chain" id="PRO_0000413608" description="Tripartite motif-containing protein 2">
    <location>
        <begin position="1"/>
        <end position="744"/>
    </location>
</feature>
<feature type="repeat" description="Filamin">
    <location>
        <begin position="320"/>
        <end position="421"/>
    </location>
</feature>
<feature type="repeat" description="NHL 1">
    <location>
        <begin position="473"/>
        <end position="516"/>
    </location>
</feature>
<feature type="repeat" description="NHL 2">
    <location>
        <begin position="520"/>
        <end position="563"/>
    </location>
</feature>
<feature type="repeat" description="NHL 3">
    <location>
        <begin position="564"/>
        <end position="605"/>
    </location>
</feature>
<feature type="repeat" description="NHL 4">
    <location>
        <begin position="609"/>
        <end position="652"/>
    </location>
</feature>
<feature type="repeat" description="NHL 5">
    <location>
        <begin position="656"/>
        <end position="699"/>
    </location>
</feature>
<feature type="repeat" description="NHL 6">
    <location>
        <begin position="700"/>
        <end position="743"/>
    </location>
</feature>
<feature type="zinc finger region" description="RING-type" evidence="4">
    <location>
        <begin position="23"/>
        <end position="64"/>
    </location>
</feature>
<feature type="zinc finger region" description="B box-type" evidence="3">
    <location>
        <begin position="113"/>
        <end position="154"/>
    </location>
</feature>
<feature type="region of interest" description="Disordered" evidence="5">
    <location>
        <begin position="432"/>
        <end position="462"/>
    </location>
</feature>
<feature type="binding site" evidence="3">
    <location>
        <position position="118"/>
    </location>
    <ligand>
        <name>Zn(2+)</name>
        <dbReference type="ChEBI" id="CHEBI:29105"/>
    </ligand>
</feature>
<feature type="binding site" evidence="3">
    <location>
        <position position="121"/>
    </location>
    <ligand>
        <name>Zn(2+)</name>
        <dbReference type="ChEBI" id="CHEBI:29105"/>
    </ligand>
</feature>
<feature type="binding site" evidence="3">
    <location>
        <position position="141"/>
    </location>
    <ligand>
        <name>Zn(2+)</name>
        <dbReference type="ChEBI" id="CHEBI:29105"/>
    </ligand>
</feature>
<feature type="binding site" evidence="3">
    <location>
        <position position="146"/>
    </location>
    <ligand>
        <name>Zn(2+)</name>
        <dbReference type="ChEBI" id="CHEBI:29105"/>
    </ligand>
</feature>
<feature type="modified residue" description="Phosphoserine" evidence="8">
    <location>
        <position position="10"/>
    </location>
</feature>
<feature type="modified residue" description="Phosphothreonine" evidence="8">
    <location>
        <position position="371"/>
    </location>
</feature>
<feature type="modified residue" description="Phosphoserine" evidence="8">
    <location>
        <position position="375"/>
    </location>
</feature>
<feature type="modified residue" description="Phosphoserine" evidence="8">
    <location>
        <position position="424"/>
    </location>
</feature>
<feature type="modified residue" description="Phosphoserine" evidence="8">
    <location>
        <position position="428"/>
    </location>
</feature>
<proteinExistence type="evidence at protein level"/>
<reference key="1">
    <citation type="submission" date="2005-09" db="EMBL/GenBank/DDBJ databases">
        <authorList>
            <person name="Mural R.J."/>
            <person name="Adams M.D."/>
            <person name="Myers E.W."/>
            <person name="Smith H.O."/>
            <person name="Venter J.C."/>
        </authorList>
    </citation>
    <scope>NUCLEOTIDE SEQUENCE [LARGE SCALE GENOMIC DNA]</scope>
</reference>
<reference key="2">
    <citation type="journal article" date="2011" name="J. Biol. Chem.">
        <title>Identification of a novel Bcl-2-interacting mediator of cell death (Bim) E3 ligase, tripartite motif-containing protein 2 (TRIM2), and its role in rapid ischemic tolerance-induced neuroprotection.</title>
        <authorList>
            <person name="Thompson S."/>
            <person name="Pearson A.N."/>
            <person name="Ashley M.D."/>
            <person name="Jessick V."/>
            <person name="Murphy B.M."/>
            <person name="Gafken P."/>
            <person name="Henshall D.C."/>
            <person name="Morris K.T."/>
            <person name="Simon R.P."/>
            <person name="Meller R."/>
        </authorList>
    </citation>
    <scope>FUNCTION</scope>
    <scope>PROTEIN SEQUENCE OF 354-368</scope>
    <scope>INTERACTION WITH BCL2L11</scope>
</reference>
<reference key="3">
    <citation type="journal article" date="2012" name="Nat. Commun.">
        <title>Quantitative maps of protein phosphorylation sites across 14 different rat organs and tissues.</title>
        <authorList>
            <person name="Lundby A."/>
            <person name="Secher A."/>
            <person name="Lage K."/>
            <person name="Nordsborg N.B."/>
            <person name="Dmytriyev A."/>
            <person name="Lundby C."/>
            <person name="Olsen J.V."/>
        </authorList>
    </citation>
    <scope>PHOSPHORYLATION [LARGE SCALE ANALYSIS] AT SER-10; THR-371; SER-375; SER-424 AND SER-428</scope>
    <scope>IDENTIFICATION BY MASS SPECTROMETRY [LARGE SCALE ANALYSIS]</scope>
</reference>
<gene>
    <name type="primary">Trim2</name>
</gene>
<name>TRIM2_RAT</name>